<sequence>MRKPADKAQVDAELQRVVELRHPEPHAVLGIHPDGDGVVIRAFRPDAVAIHVLPESGGRVAMTHRPGGVYEARINGKDQTFNYLLEVEYPGKRVFTLRDPYSFLPTLGEMDLYYAGEGRHERLWERMGAHLLHHHGVRGTSFAVWAPTAAGVSVVGDFNGWDGRLHSMRRMGSSGIWELFVPEVGEGTRYKFEIRPGQGGPNVLKADPFAFRTEVPPATASVVHDLARYTWGDAAWLEQRAQRRDVHHQPWSVYEVHLGSWRRVVEDGDRPMTYRELAPALAEYIKFTGFTHIELLPVAEHPYGGSWGYQVGGYYAPTARFGHPDDLRFFIDHMHQEGIGVLVDWVPGHFPRDLHALGQFDGTALYEHADPRKGAQPDWGTLVFNFGRNEVRNFLIANALFWIEEYHIDGLRVDAVASMLYLDYSRKQGEWIPNRWGGRENEEAIHFLRELNETVHRKHPGVVVIAEESTAWPKVSAPVSEGGLGFDYKWNMGWMHDTLSYFSKDPIYRQYHHNQLTFGLLYAFSEQFMLPLSHDEVVHGKGSLYGRMPGDPWQKRANLRALFAWMWAHPGKKLVFMGGEFGQPAEWNHDKSLDWHLTHDPGHHGILQLVSDLNRIYRDMPALHDADGEPMGFQWLQPDSAAYNVFAFVRRARQPGRHVVCIANLSPTVRENYRVGFPFQGRYVELLNTDAEQYGGSNLGNMGQIHTEPTGWDGQPASATLTLPPLSVLWFTPG</sequence>
<accession>Q1D654</accession>
<protein>
    <recommendedName>
        <fullName evidence="1">1,4-alpha-glucan branching enzyme GlgB</fullName>
        <ecNumber evidence="1">2.4.1.18</ecNumber>
    </recommendedName>
    <alternativeName>
        <fullName evidence="1">1,4-alpha-D-glucan:1,4-alpha-D-glucan 6-glucosyl-transferase</fullName>
    </alternativeName>
    <alternativeName>
        <fullName evidence="1">Alpha-(1-&gt;4)-glucan branching enzyme</fullName>
    </alternativeName>
    <alternativeName>
        <fullName evidence="1">Glycogen branching enzyme</fullName>
        <shortName evidence="1">BE</shortName>
    </alternativeName>
</protein>
<feature type="chain" id="PRO_0000260668" description="1,4-alpha-glucan branching enzyme GlgB">
    <location>
        <begin position="1"/>
        <end position="734"/>
    </location>
</feature>
<feature type="active site" description="Nucleophile" evidence="1">
    <location>
        <position position="414"/>
    </location>
</feature>
<feature type="active site" description="Proton donor" evidence="1">
    <location>
        <position position="467"/>
    </location>
</feature>
<organism>
    <name type="scientific">Myxococcus xanthus (strain DK1622)</name>
    <dbReference type="NCBI Taxonomy" id="246197"/>
    <lineage>
        <taxon>Bacteria</taxon>
        <taxon>Pseudomonadati</taxon>
        <taxon>Myxococcota</taxon>
        <taxon>Myxococcia</taxon>
        <taxon>Myxococcales</taxon>
        <taxon>Cystobacterineae</taxon>
        <taxon>Myxococcaceae</taxon>
        <taxon>Myxococcus</taxon>
    </lineage>
</organism>
<keyword id="KW-0119">Carbohydrate metabolism</keyword>
<keyword id="KW-0320">Glycogen biosynthesis</keyword>
<keyword id="KW-0321">Glycogen metabolism</keyword>
<keyword id="KW-0328">Glycosyltransferase</keyword>
<keyword id="KW-1185">Reference proteome</keyword>
<keyword id="KW-0808">Transferase</keyword>
<name>GLGB_MYXXD</name>
<proteinExistence type="inferred from homology"/>
<reference key="1">
    <citation type="journal article" date="2006" name="Proc. Natl. Acad. Sci. U.S.A.">
        <title>Evolution of sensory complexity recorded in a myxobacterial genome.</title>
        <authorList>
            <person name="Goldman B.S."/>
            <person name="Nierman W.C."/>
            <person name="Kaiser D."/>
            <person name="Slater S.C."/>
            <person name="Durkin A.S."/>
            <person name="Eisen J.A."/>
            <person name="Ronning C.M."/>
            <person name="Barbazuk W.B."/>
            <person name="Blanchard M."/>
            <person name="Field C."/>
            <person name="Halling C."/>
            <person name="Hinkle G."/>
            <person name="Iartchuk O."/>
            <person name="Kim H.S."/>
            <person name="Mackenzie C."/>
            <person name="Madupu R."/>
            <person name="Miller N."/>
            <person name="Shvartsbeyn A."/>
            <person name="Sullivan S.A."/>
            <person name="Vaudin M."/>
            <person name="Wiegand R."/>
            <person name="Kaplan H.B."/>
        </authorList>
    </citation>
    <scope>NUCLEOTIDE SEQUENCE [LARGE SCALE GENOMIC DNA]</scope>
    <source>
        <strain>DK1622</strain>
    </source>
</reference>
<evidence type="ECO:0000255" key="1">
    <source>
        <dbReference type="HAMAP-Rule" id="MF_00685"/>
    </source>
</evidence>
<gene>
    <name evidence="1" type="primary">glgB</name>
    <name type="ordered locus">MXAN_3682</name>
</gene>
<dbReference type="EC" id="2.4.1.18" evidence="1"/>
<dbReference type="EMBL" id="CP000113">
    <property type="protein sequence ID" value="ABF92763.1"/>
    <property type="molecule type" value="Genomic_DNA"/>
</dbReference>
<dbReference type="RefSeq" id="WP_011553700.1">
    <property type="nucleotide sequence ID" value="NC_008095.1"/>
</dbReference>
<dbReference type="SMR" id="Q1D654"/>
<dbReference type="STRING" id="246197.MXAN_3682"/>
<dbReference type="CAZy" id="CBM48">
    <property type="family name" value="Carbohydrate-Binding Module Family 48"/>
</dbReference>
<dbReference type="CAZy" id="GH13">
    <property type="family name" value="Glycoside Hydrolase Family 13"/>
</dbReference>
<dbReference type="EnsemblBacteria" id="ABF92763">
    <property type="protein sequence ID" value="ABF92763"/>
    <property type="gene ID" value="MXAN_3682"/>
</dbReference>
<dbReference type="GeneID" id="41361017"/>
<dbReference type="KEGG" id="mxa:MXAN_3682"/>
<dbReference type="eggNOG" id="COG0296">
    <property type="taxonomic scope" value="Bacteria"/>
</dbReference>
<dbReference type="HOGENOM" id="CLU_004245_3_2_7"/>
<dbReference type="OrthoDB" id="9800174at2"/>
<dbReference type="UniPathway" id="UPA00164"/>
<dbReference type="Proteomes" id="UP000002402">
    <property type="component" value="Chromosome"/>
</dbReference>
<dbReference type="GO" id="GO:0005829">
    <property type="term" value="C:cytosol"/>
    <property type="evidence" value="ECO:0007669"/>
    <property type="project" value="TreeGrafter"/>
</dbReference>
<dbReference type="GO" id="GO:0003844">
    <property type="term" value="F:1,4-alpha-glucan branching enzyme activity"/>
    <property type="evidence" value="ECO:0007669"/>
    <property type="project" value="UniProtKB-UniRule"/>
</dbReference>
<dbReference type="GO" id="GO:0043169">
    <property type="term" value="F:cation binding"/>
    <property type="evidence" value="ECO:0007669"/>
    <property type="project" value="InterPro"/>
</dbReference>
<dbReference type="GO" id="GO:0004553">
    <property type="term" value="F:hydrolase activity, hydrolyzing O-glycosyl compounds"/>
    <property type="evidence" value="ECO:0007669"/>
    <property type="project" value="InterPro"/>
</dbReference>
<dbReference type="GO" id="GO:0005978">
    <property type="term" value="P:glycogen biosynthetic process"/>
    <property type="evidence" value="ECO:0007669"/>
    <property type="project" value="UniProtKB-UniRule"/>
</dbReference>
<dbReference type="CDD" id="cd11322">
    <property type="entry name" value="AmyAc_Glg_BE"/>
    <property type="match status" value="1"/>
</dbReference>
<dbReference type="CDD" id="cd02855">
    <property type="entry name" value="E_set_GBE_prok_N"/>
    <property type="match status" value="1"/>
</dbReference>
<dbReference type="FunFam" id="2.60.40.10:FF:000169">
    <property type="entry name" value="1,4-alpha-glucan branching enzyme GlgB"/>
    <property type="match status" value="1"/>
</dbReference>
<dbReference type="FunFam" id="2.60.40.1180:FF:000002">
    <property type="entry name" value="1,4-alpha-glucan branching enzyme GlgB"/>
    <property type="match status" value="1"/>
</dbReference>
<dbReference type="FunFam" id="3.20.20.80:FF:000003">
    <property type="entry name" value="1,4-alpha-glucan branching enzyme GlgB"/>
    <property type="match status" value="1"/>
</dbReference>
<dbReference type="Gene3D" id="3.20.20.80">
    <property type="entry name" value="Glycosidases"/>
    <property type="match status" value="1"/>
</dbReference>
<dbReference type="Gene3D" id="2.60.40.1180">
    <property type="entry name" value="Golgi alpha-mannosidase II"/>
    <property type="match status" value="1"/>
</dbReference>
<dbReference type="Gene3D" id="2.60.40.10">
    <property type="entry name" value="Immunoglobulins"/>
    <property type="match status" value="2"/>
</dbReference>
<dbReference type="HAMAP" id="MF_00685">
    <property type="entry name" value="GlgB"/>
    <property type="match status" value="1"/>
</dbReference>
<dbReference type="InterPro" id="IPR006048">
    <property type="entry name" value="A-amylase/branching_C"/>
</dbReference>
<dbReference type="InterPro" id="IPR037439">
    <property type="entry name" value="Branching_enzy"/>
</dbReference>
<dbReference type="InterPro" id="IPR006407">
    <property type="entry name" value="GlgB"/>
</dbReference>
<dbReference type="InterPro" id="IPR054169">
    <property type="entry name" value="GlgB_N"/>
</dbReference>
<dbReference type="InterPro" id="IPR044143">
    <property type="entry name" value="GlgB_N_E_set_prok"/>
</dbReference>
<dbReference type="InterPro" id="IPR006047">
    <property type="entry name" value="Glyco_hydro_13_cat_dom"/>
</dbReference>
<dbReference type="InterPro" id="IPR004193">
    <property type="entry name" value="Glyco_hydro_13_N"/>
</dbReference>
<dbReference type="InterPro" id="IPR013780">
    <property type="entry name" value="Glyco_hydro_b"/>
</dbReference>
<dbReference type="InterPro" id="IPR017853">
    <property type="entry name" value="Glycoside_hydrolase_SF"/>
</dbReference>
<dbReference type="InterPro" id="IPR013783">
    <property type="entry name" value="Ig-like_fold"/>
</dbReference>
<dbReference type="InterPro" id="IPR014756">
    <property type="entry name" value="Ig_E-set"/>
</dbReference>
<dbReference type="NCBIfam" id="TIGR01515">
    <property type="entry name" value="branching_enzym"/>
    <property type="match status" value="1"/>
</dbReference>
<dbReference type="NCBIfam" id="NF003811">
    <property type="entry name" value="PRK05402.1"/>
    <property type="match status" value="1"/>
</dbReference>
<dbReference type="NCBIfam" id="NF008967">
    <property type="entry name" value="PRK12313.1"/>
    <property type="match status" value="1"/>
</dbReference>
<dbReference type="PANTHER" id="PTHR43651">
    <property type="entry name" value="1,4-ALPHA-GLUCAN-BRANCHING ENZYME"/>
    <property type="match status" value="1"/>
</dbReference>
<dbReference type="PANTHER" id="PTHR43651:SF3">
    <property type="entry name" value="1,4-ALPHA-GLUCAN-BRANCHING ENZYME"/>
    <property type="match status" value="1"/>
</dbReference>
<dbReference type="Pfam" id="PF00128">
    <property type="entry name" value="Alpha-amylase"/>
    <property type="match status" value="2"/>
</dbReference>
<dbReference type="Pfam" id="PF02806">
    <property type="entry name" value="Alpha-amylase_C"/>
    <property type="match status" value="1"/>
</dbReference>
<dbReference type="Pfam" id="PF02922">
    <property type="entry name" value="CBM_48"/>
    <property type="match status" value="1"/>
</dbReference>
<dbReference type="Pfam" id="PF22019">
    <property type="entry name" value="GlgB_N"/>
    <property type="match status" value="1"/>
</dbReference>
<dbReference type="PIRSF" id="PIRSF000463">
    <property type="entry name" value="GlgB"/>
    <property type="match status" value="1"/>
</dbReference>
<dbReference type="SMART" id="SM00642">
    <property type="entry name" value="Aamy"/>
    <property type="match status" value="1"/>
</dbReference>
<dbReference type="SUPFAM" id="SSF51445">
    <property type="entry name" value="(Trans)glycosidases"/>
    <property type="match status" value="1"/>
</dbReference>
<dbReference type="SUPFAM" id="SSF81296">
    <property type="entry name" value="E set domains"/>
    <property type="match status" value="2"/>
</dbReference>
<dbReference type="SUPFAM" id="SSF51011">
    <property type="entry name" value="Glycosyl hydrolase domain"/>
    <property type="match status" value="1"/>
</dbReference>
<comment type="function">
    <text evidence="1">Catalyzes the formation of the alpha-1,6-glucosidic linkages in glycogen by scission of a 1,4-alpha-linked oligosaccharide from growing alpha-1,4-glucan chains and the subsequent attachment of the oligosaccharide to the alpha-1,6 position.</text>
</comment>
<comment type="catalytic activity">
    <reaction evidence="1">
        <text>Transfers a segment of a (1-&gt;4)-alpha-D-glucan chain to a primary hydroxy group in a similar glucan chain.</text>
        <dbReference type="EC" id="2.4.1.18"/>
    </reaction>
</comment>
<comment type="pathway">
    <text evidence="1">Glycan biosynthesis; glycogen biosynthesis.</text>
</comment>
<comment type="subunit">
    <text evidence="1">Monomer.</text>
</comment>
<comment type="similarity">
    <text evidence="1">Belongs to the glycosyl hydrolase 13 family. GlgB subfamily.</text>
</comment>